<sequence length="44" mass="5485">MKRTYQPHNKRRKRTHGFLVRMRTRGGRKVLKRRRLKGRKRLAV</sequence>
<dbReference type="EMBL" id="CP000679">
    <property type="protein sequence ID" value="ABP68341.1"/>
    <property type="molecule type" value="Genomic_DNA"/>
</dbReference>
<dbReference type="RefSeq" id="WP_011918258.1">
    <property type="nucleotide sequence ID" value="NC_009437.1"/>
</dbReference>
<dbReference type="SMR" id="A4XN56"/>
<dbReference type="STRING" id="351627.Csac_2776"/>
<dbReference type="KEGG" id="csc:Csac_2776"/>
<dbReference type="eggNOG" id="COG0230">
    <property type="taxonomic scope" value="Bacteria"/>
</dbReference>
<dbReference type="HOGENOM" id="CLU_129938_2_0_9"/>
<dbReference type="Proteomes" id="UP000000256">
    <property type="component" value="Chromosome"/>
</dbReference>
<dbReference type="GO" id="GO:1990904">
    <property type="term" value="C:ribonucleoprotein complex"/>
    <property type="evidence" value="ECO:0007669"/>
    <property type="project" value="UniProtKB-KW"/>
</dbReference>
<dbReference type="GO" id="GO:0005840">
    <property type="term" value="C:ribosome"/>
    <property type="evidence" value="ECO:0007669"/>
    <property type="project" value="UniProtKB-KW"/>
</dbReference>
<dbReference type="GO" id="GO:0003735">
    <property type="term" value="F:structural constituent of ribosome"/>
    <property type="evidence" value="ECO:0007669"/>
    <property type="project" value="InterPro"/>
</dbReference>
<dbReference type="GO" id="GO:0006412">
    <property type="term" value="P:translation"/>
    <property type="evidence" value="ECO:0007669"/>
    <property type="project" value="UniProtKB-UniRule"/>
</dbReference>
<dbReference type="FunFam" id="1.10.287.3980:FF:000001">
    <property type="entry name" value="Mitochondrial ribosomal protein L34"/>
    <property type="match status" value="1"/>
</dbReference>
<dbReference type="Gene3D" id="1.10.287.3980">
    <property type="match status" value="1"/>
</dbReference>
<dbReference type="HAMAP" id="MF_00391">
    <property type="entry name" value="Ribosomal_bL34"/>
    <property type="match status" value="1"/>
</dbReference>
<dbReference type="InterPro" id="IPR000271">
    <property type="entry name" value="Ribosomal_bL34"/>
</dbReference>
<dbReference type="InterPro" id="IPR020939">
    <property type="entry name" value="Ribosomal_bL34_CS"/>
</dbReference>
<dbReference type="NCBIfam" id="TIGR01030">
    <property type="entry name" value="rpmH_bact"/>
    <property type="match status" value="1"/>
</dbReference>
<dbReference type="PANTHER" id="PTHR14503:SF4">
    <property type="entry name" value="LARGE RIBOSOMAL SUBUNIT PROTEIN BL34M"/>
    <property type="match status" value="1"/>
</dbReference>
<dbReference type="PANTHER" id="PTHR14503">
    <property type="entry name" value="MITOCHONDRIAL RIBOSOMAL PROTEIN 34 FAMILY MEMBER"/>
    <property type="match status" value="1"/>
</dbReference>
<dbReference type="Pfam" id="PF00468">
    <property type="entry name" value="Ribosomal_L34"/>
    <property type="match status" value="1"/>
</dbReference>
<dbReference type="PROSITE" id="PS00784">
    <property type="entry name" value="RIBOSOMAL_L34"/>
    <property type="match status" value="1"/>
</dbReference>
<comment type="similarity">
    <text evidence="1">Belongs to the bacterial ribosomal protein bL34 family.</text>
</comment>
<gene>
    <name evidence="1" type="primary">rpmH</name>
    <name type="ordered locus">Csac_2776</name>
</gene>
<evidence type="ECO:0000255" key="1">
    <source>
        <dbReference type="HAMAP-Rule" id="MF_00391"/>
    </source>
</evidence>
<evidence type="ECO:0000305" key="2"/>
<reference key="1">
    <citation type="submission" date="2007-04" db="EMBL/GenBank/DDBJ databases">
        <title>Genome sequence of the thermophilic hydrogen-producing bacterium Caldicellulosiruptor saccharolyticus DSM 8903.</title>
        <authorList>
            <person name="Copeland A."/>
            <person name="Lucas S."/>
            <person name="Lapidus A."/>
            <person name="Barry K."/>
            <person name="Detter J.C."/>
            <person name="Glavina del Rio T."/>
            <person name="Hammon N."/>
            <person name="Israni S."/>
            <person name="Dalin E."/>
            <person name="Tice H."/>
            <person name="Pitluck S."/>
            <person name="Kiss H."/>
            <person name="Brettin T."/>
            <person name="Bruce D."/>
            <person name="Han C."/>
            <person name="Schmutz J."/>
            <person name="Larimer F."/>
            <person name="Land M."/>
            <person name="Hauser L."/>
            <person name="Kyrpides N."/>
            <person name="Lykidis A."/>
            <person name="van de Werken H.J.G."/>
            <person name="Verhaart M.R.A."/>
            <person name="VanFossen A.L."/>
            <person name="Lewis D.L."/>
            <person name="Nichols J.D."/>
            <person name="Goorissen H.P."/>
            <person name="van Niel E.W.J."/>
            <person name="Stams F.J.M."/>
            <person name="Willquist K.U."/>
            <person name="Ward D.E."/>
            <person name="van der Oost J."/>
            <person name="Kelly R.M."/>
            <person name="Kengen S.M.W."/>
            <person name="Richardson P."/>
        </authorList>
    </citation>
    <scope>NUCLEOTIDE SEQUENCE [LARGE SCALE GENOMIC DNA]</scope>
    <source>
        <strain>ATCC 43494 / DSM 8903 / Tp8T 6331</strain>
    </source>
</reference>
<protein>
    <recommendedName>
        <fullName evidence="1">Large ribosomal subunit protein bL34</fullName>
    </recommendedName>
    <alternativeName>
        <fullName evidence="2">50S ribosomal protein L34</fullName>
    </alternativeName>
</protein>
<organism>
    <name type="scientific">Caldicellulosiruptor saccharolyticus (strain ATCC 43494 / DSM 8903 / Tp8T 6331)</name>
    <dbReference type="NCBI Taxonomy" id="351627"/>
    <lineage>
        <taxon>Bacteria</taxon>
        <taxon>Bacillati</taxon>
        <taxon>Bacillota</taxon>
        <taxon>Bacillota incertae sedis</taxon>
        <taxon>Caldicellulosiruptorales</taxon>
        <taxon>Caldicellulosiruptoraceae</taxon>
        <taxon>Caldicellulosiruptor</taxon>
    </lineage>
</organism>
<proteinExistence type="inferred from homology"/>
<name>RL34_CALS8</name>
<keyword id="KW-0687">Ribonucleoprotein</keyword>
<keyword id="KW-0689">Ribosomal protein</keyword>
<feature type="chain" id="PRO_1000013305" description="Large ribosomal subunit protein bL34">
    <location>
        <begin position="1"/>
        <end position="44"/>
    </location>
</feature>
<accession>A4XN56</accession>